<comment type="subcellular location">
    <subcellularLocation>
        <location evidence="1">Endosome membrane</location>
        <topology evidence="3">Multi-pass membrane protein</topology>
    </subcellularLocation>
    <subcellularLocation>
        <location evidence="2">Golgi apparatus membrane</location>
        <topology evidence="3">Multi-pass membrane protein</topology>
    </subcellularLocation>
</comment>
<comment type="alternative products">
    <event type="alternative splicing"/>
    <isoform>
        <id>Q9FYQ8-1</id>
        <name>1</name>
        <sequence type="displayed"/>
    </isoform>
    <text>A number of isoforms are produced. According to EST sequences.</text>
</comment>
<comment type="domain">
    <text evidence="2">The C-terminal KXD/E motif functions as a Golgi retention signal, certainly through the binding to the COP1 coatomer.</text>
</comment>
<comment type="similarity">
    <text>Belongs to the nonaspanin (TM9SF) (TC 9.A.2) family.</text>
</comment>
<comment type="sequence caution" evidence="6">
    <conflict type="erroneous initiation">
        <sequence resource="EMBL-CDS" id="AAM20600"/>
    </conflict>
    <text>Truncated N-terminus.</text>
</comment>
<evidence type="ECO:0000250" key="1">
    <source>
        <dbReference type="UniProtKB" id="P32802"/>
    </source>
</evidence>
<evidence type="ECO:0000250" key="2">
    <source>
        <dbReference type="UniProtKB" id="Q940G0"/>
    </source>
</evidence>
<evidence type="ECO:0000255" key="3"/>
<evidence type="ECO:0000303" key="4">
    <source>
    </source>
</evidence>
<evidence type="ECO:0000303" key="5">
    <source>
    </source>
</evidence>
<evidence type="ECO:0000305" key="6"/>
<evidence type="ECO:0000312" key="7">
    <source>
        <dbReference type="Araport" id="AT5G35160"/>
    </source>
</evidence>
<evidence type="ECO:0000312" key="8">
    <source>
        <dbReference type="EMBL" id="BAB10022.1"/>
    </source>
</evidence>
<proteinExistence type="evidence at transcript level"/>
<organism>
    <name type="scientific">Arabidopsis thaliana</name>
    <name type="common">Mouse-ear cress</name>
    <dbReference type="NCBI Taxonomy" id="3702"/>
    <lineage>
        <taxon>Eukaryota</taxon>
        <taxon>Viridiplantae</taxon>
        <taxon>Streptophyta</taxon>
        <taxon>Embryophyta</taxon>
        <taxon>Tracheophyta</taxon>
        <taxon>Spermatophyta</taxon>
        <taxon>Magnoliopsida</taxon>
        <taxon>eudicotyledons</taxon>
        <taxon>Gunneridae</taxon>
        <taxon>Pentapetalae</taxon>
        <taxon>rosids</taxon>
        <taxon>malvids</taxon>
        <taxon>Brassicales</taxon>
        <taxon>Brassicaceae</taxon>
        <taxon>Camelineae</taxon>
        <taxon>Arabidopsis</taxon>
    </lineage>
</organism>
<sequence>MRSMDRFGIWVLAILLVIQSSFGFYLPGSYPHKYEVGDYLNVKVNSLTSIETEMPFSYYSLPFCKPSEGIKDSAENLGELLMGDRIENSPYRFRMFKNESEIFLCQTDKLSADSLKLLKKRIDEMYQVNPMLDNLPAIRYTKRDGYVLRWTGYPVGIKVQDVYYVFNHLKFKVLVHKYEEAANVARVMGTGDAAEVIPTIGKKDSDVPGYMVVGFEVVPCSFAHNGESTKKLKMYERYTTPIKCDSTRVSMSVKEGQSIVFSYEVSFEESDIKWPSRWDAYLKMEGSKVHWFSILNSLMVITFLAGIVLVIFLRTVRRDLTRYEELDKEAQAQMNEELSGWKLVVGDVFRAPSNASLLCVMVGDGVQILGMAVVTILFAALGFMSPASRGTLITGMLFFYMILGIAAGYVSVRLWRTIGCGEHRGWMSVAWKAACFFPGIAFLILTTLNFLLWGSHSTGAIPFSLFVILLLLWFCISVPLTLIGGYFGAKAPHIEFPVRTNQIPREIPAQKYPSWLLVLGAGTLPFGTLFIELFFIMSSIWMGRVYYVFGFLFVVLILLVVVCAEVSLVLTYMHLCVEDYKWWWKSFFASGSVAIYIFIYSINYLVFDLKSLSGPVSATLYLGYSLFMVLAIMLATGTVGFLSSFWFVHYLFSSVKLD</sequence>
<name>TMN11_ARATH</name>
<accession>Q9FYQ8</accession>
<accession>Q8L424</accession>
<dbReference type="EMBL" id="AP000421">
    <property type="protein sequence ID" value="BAB10022.1"/>
    <property type="molecule type" value="Genomic_DNA"/>
</dbReference>
<dbReference type="EMBL" id="CP002688">
    <property type="protein sequence ID" value="AED93935.1"/>
    <property type="molecule type" value="Genomic_DNA"/>
</dbReference>
<dbReference type="EMBL" id="CP002688">
    <property type="protein sequence ID" value="ANM71210.1"/>
    <property type="molecule type" value="Genomic_DNA"/>
</dbReference>
<dbReference type="EMBL" id="CP002688">
    <property type="protein sequence ID" value="ANM71211.1"/>
    <property type="molecule type" value="Genomic_DNA"/>
</dbReference>
<dbReference type="EMBL" id="AY099749">
    <property type="protein sequence ID" value="AAM20600.1"/>
    <property type="status" value="ALT_INIT"/>
    <property type="molecule type" value="mRNA"/>
</dbReference>
<dbReference type="EMBL" id="AY128866">
    <property type="protein sequence ID" value="AAM91266.1"/>
    <property type="molecule type" value="mRNA"/>
</dbReference>
<dbReference type="RefSeq" id="NP_001190420.1">
    <molecule id="Q9FYQ8-1"/>
    <property type="nucleotide sequence ID" value="NM_001203491.2"/>
</dbReference>
<dbReference type="RefSeq" id="NP_001332754.1">
    <molecule id="Q9FYQ8-1"/>
    <property type="nucleotide sequence ID" value="NM_001344097.1"/>
</dbReference>
<dbReference type="RefSeq" id="NP_001332755.1">
    <molecule id="Q9FYQ8-1"/>
    <property type="nucleotide sequence ID" value="NM_001344096.1"/>
</dbReference>
<dbReference type="SMR" id="Q9FYQ8"/>
<dbReference type="FunCoup" id="Q9FYQ8">
    <property type="interactions" value="1567"/>
</dbReference>
<dbReference type="STRING" id="3702.Q9FYQ8"/>
<dbReference type="PaxDb" id="3702-AT5G35160.2"/>
<dbReference type="ProteomicsDB" id="234438">
    <molecule id="Q9FYQ8-1"/>
</dbReference>
<dbReference type="EnsemblPlants" id="AT5G35160.2">
    <molecule id="Q9FYQ8-1"/>
    <property type="protein sequence ID" value="AT5G35160.2"/>
    <property type="gene ID" value="AT5G35160"/>
</dbReference>
<dbReference type="EnsemblPlants" id="AT5G35160.3">
    <molecule id="Q9FYQ8-1"/>
    <property type="protein sequence ID" value="AT5G35160.3"/>
    <property type="gene ID" value="AT5G35160"/>
</dbReference>
<dbReference type="EnsemblPlants" id="AT5G35160.4">
    <molecule id="Q9FYQ8-1"/>
    <property type="protein sequence ID" value="AT5G35160.4"/>
    <property type="gene ID" value="AT5G35160"/>
</dbReference>
<dbReference type="GeneID" id="833470"/>
<dbReference type="Gramene" id="AT5G35160.2">
    <molecule id="Q9FYQ8-1"/>
    <property type="protein sequence ID" value="AT5G35160.2"/>
    <property type="gene ID" value="AT5G35160"/>
</dbReference>
<dbReference type="Gramene" id="AT5G35160.3">
    <molecule id="Q9FYQ8-1"/>
    <property type="protein sequence ID" value="AT5G35160.3"/>
    <property type="gene ID" value="AT5G35160"/>
</dbReference>
<dbReference type="Gramene" id="AT5G35160.4">
    <molecule id="Q9FYQ8-1"/>
    <property type="protein sequence ID" value="AT5G35160.4"/>
    <property type="gene ID" value="AT5G35160"/>
</dbReference>
<dbReference type="KEGG" id="ath:AT5G35160"/>
<dbReference type="Araport" id="AT5G35160"/>
<dbReference type="TAIR" id="AT5G35160">
    <property type="gene designation" value="TMN11"/>
</dbReference>
<dbReference type="eggNOG" id="KOG1278">
    <property type="taxonomic scope" value="Eukaryota"/>
</dbReference>
<dbReference type="HOGENOM" id="CLU_010714_4_1_1"/>
<dbReference type="InParanoid" id="Q9FYQ8"/>
<dbReference type="OrthoDB" id="1666796at2759"/>
<dbReference type="PhylomeDB" id="Q9FYQ8"/>
<dbReference type="CD-CODE" id="4299E36E">
    <property type="entry name" value="Nucleolus"/>
</dbReference>
<dbReference type="PRO" id="PR:Q9FYQ8"/>
<dbReference type="Proteomes" id="UP000006548">
    <property type="component" value="Chromosome 5"/>
</dbReference>
<dbReference type="ExpressionAtlas" id="Q9FYQ8">
    <property type="expression patterns" value="baseline and differential"/>
</dbReference>
<dbReference type="GO" id="GO:0005768">
    <property type="term" value="C:endosome"/>
    <property type="evidence" value="ECO:0007005"/>
    <property type="project" value="TAIR"/>
</dbReference>
<dbReference type="GO" id="GO:0010008">
    <property type="term" value="C:endosome membrane"/>
    <property type="evidence" value="ECO:0007669"/>
    <property type="project" value="UniProtKB-SubCell"/>
</dbReference>
<dbReference type="GO" id="GO:0005794">
    <property type="term" value="C:Golgi apparatus"/>
    <property type="evidence" value="ECO:0007005"/>
    <property type="project" value="TAIR"/>
</dbReference>
<dbReference type="GO" id="GO:0005797">
    <property type="term" value="C:Golgi medial cisterna"/>
    <property type="evidence" value="ECO:0007005"/>
    <property type="project" value="TAIR"/>
</dbReference>
<dbReference type="GO" id="GO:0000139">
    <property type="term" value="C:Golgi membrane"/>
    <property type="evidence" value="ECO:0007669"/>
    <property type="project" value="UniProtKB-SubCell"/>
</dbReference>
<dbReference type="GO" id="GO:0009536">
    <property type="term" value="C:plastid"/>
    <property type="evidence" value="ECO:0007005"/>
    <property type="project" value="TAIR"/>
</dbReference>
<dbReference type="GO" id="GO:0005802">
    <property type="term" value="C:trans-Golgi network"/>
    <property type="evidence" value="ECO:0007005"/>
    <property type="project" value="TAIR"/>
</dbReference>
<dbReference type="InterPro" id="IPR004240">
    <property type="entry name" value="EMP70"/>
</dbReference>
<dbReference type="PANTHER" id="PTHR10766:SF55">
    <property type="entry name" value="TRANSMEMBRANE 9 SUPERFAMILY MEMBER 4"/>
    <property type="match status" value="1"/>
</dbReference>
<dbReference type="PANTHER" id="PTHR10766">
    <property type="entry name" value="TRANSMEMBRANE 9 SUPERFAMILY PROTEIN"/>
    <property type="match status" value="1"/>
</dbReference>
<dbReference type="Pfam" id="PF02990">
    <property type="entry name" value="EMP70"/>
    <property type="match status" value="1"/>
</dbReference>
<keyword id="KW-0025">Alternative splicing</keyword>
<keyword id="KW-0967">Endosome</keyword>
<keyword id="KW-0333">Golgi apparatus</keyword>
<keyword id="KW-0472">Membrane</keyword>
<keyword id="KW-1185">Reference proteome</keyword>
<keyword id="KW-0732">Signal</keyword>
<keyword id="KW-0812">Transmembrane</keyword>
<keyword id="KW-1133">Transmembrane helix</keyword>
<gene>
    <name evidence="4" type="primary">TMN11</name>
    <name evidence="5" type="synonym">EMP6</name>
    <name evidence="7" type="ordered locus">At5g35160</name>
    <name evidence="8" type="ORF">T13C12.17</name>
</gene>
<feature type="signal peptide" evidence="3">
    <location>
        <begin position="1"/>
        <end position="23"/>
    </location>
</feature>
<feature type="chain" id="PRO_0000431268" description="Transmembrane 9 superfamily member 11" evidence="3">
    <location>
        <begin position="24"/>
        <end position="658"/>
    </location>
</feature>
<feature type="topological domain" description="Lumenal" evidence="6">
    <location>
        <begin position="24"/>
        <end position="291"/>
    </location>
</feature>
<feature type="transmembrane region" description="Helical; Name=1" evidence="3">
    <location>
        <begin position="292"/>
        <end position="312"/>
    </location>
</feature>
<feature type="topological domain" description="Cytoplasmic" evidence="6">
    <location>
        <begin position="313"/>
        <end position="364"/>
    </location>
</feature>
<feature type="transmembrane region" description="Helical; Name=2" evidence="3">
    <location>
        <begin position="365"/>
        <end position="385"/>
    </location>
</feature>
<feature type="topological domain" description="Lumenal" evidence="6">
    <location>
        <begin position="386"/>
        <end position="391"/>
    </location>
</feature>
<feature type="transmembrane region" description="Helical; Name=3" evidence="3">
    <location>
        <begin position="392"/>
        <end position="412"/>
    </location>
</feature>
<feature type="topological domain" description="Cytoplasmic" evidence="6">
    <location>
        <begin position="413"/>
        <end position="432"/>
    </location>
</feature>
<feature type="transmembrane region" description="Helical; Name=4" evidence="3">
    <location>
        <begin position="433"/>
        <end position="453"/>
    </location>
</feature>
<feature type="topological domain" description="Lumenal" evidence="6">
    <location>
        <begin position="454"/>
        <end position="462"/>
    </location>
</feature>
<feature type="transmembrane region" description="Helical; Name=5" evidence="3">
    <location>
        <begin position="463"/>
        <end position="483"/>
    </location>
</feature>
<feature type="topological domain" description="Cytoplasmic" evidence="6">
    <location>
        <begin position="484"/>
        <end position="515"/>
    </location>
</feature>
<feature type="transmembrane region" description="Helical; Name=6" evidence="3">
    <location>
        <begin position="516"/>
        <end position="536"/>
    </location>
</feature>
<feature type="topological domain" description="Lumenal" evidence="6">
    <location>
        <begin position="537"/>
        <end position="547"/>
    </location>
</feature>
<feature type="transmembrane region" description="Helical; Name=7" evidence="3">
    <location>
        <begin position="548"/>
        <end position="568"/>
    </location>
</feature>
<feature type="topological domain" description="Cytoplasmic" evidence="6">
    <location>
        <begin position="569"/>
        <end position="586"/>
    </location>
</feature>
<feature type="transmembrane region" description="Helical; Name=8" evidence="3">
    <location>
        <begin position="587"/>
        <end position="607"/>
    </location>
</feature>
<feature type="topological domain" description="Lumenal" evidence="6">
    <location>
        <begin position="608"/>
        <end position="619"/>
    </location>
</feature>
<feature type="transmembrane region" description="Helical; Name=9" evidence="3">
    <location>
        <begin position="620"/>
        <end position="640"/>
    </location>
</feature>
<feature type="topological domain" description="Cytoplasmic" evidence="6">
    <location>
        <begin position="641"/>
        <end position="658"/>
    </location>
</feature>
<feature type="short sequence motif" description="Endoplasmic reticulum export signal" evidence="2">
    <location>
        <begin position="647"/>
        <end position="652"/>
    </location>
</feature>
<feature type="short sequence motif" description="Golgi retention signal" evidence="2">
    <location>
        <begin position="656"/>
        <end position="658"/>
    </location>
</feature>
<reference key="1">
    <citation type="submission" date="1999-09" db="EMBL/GenBank/DDBJ databases">
        <title>Structural analysis of Arabidopsis thaliana chromosome 5. XI.</title>
        <authorList>
            <person name="Kaneko T."/>
            <person name="Katoh T."/>
            <person name="Asamizu E."/>
            <person name="Sato S."/>
            <person name="Nakamura Y."/>
            <person name="Kotani H."/>
            <person name="Tabata S."/>
        </authorList>
    </citation>
    <scope>NUCLEOTIDE SEQUENCE [LARGE SCALE GENOMIC DNA]</scope>
    <source>
        <strain>cv. Columbia</strain>
    </source>
</reference>
<reference key="2">
    <citation type="journal article" date="2017" name="Plant J.">
        <title>Araport11: a complete reannotation of the Arabidopsis thaliana reference genome.</title>
        <authorList>
            <person name="Cheng C.Y."/>
            <person name="Krishnakumar V."/>
            <person name="Chan A.P."/>
            <person name="Thibaud-Nissen F."/>
            <person name="Schobel S."/>
            <person name="Town C.D."/>
        </authorList>
    </citation>
    <scope>GENOME REANNOTATION</scope>
    <source>
        <strain>cv. Columbia</strain>
    </source>
</reference>
<reference key="3">
    <citation type="journal article" date="2003" name="Science">
        <title>Empirical analysis of transcriptional activity in the Arabidopsis genome.</title>
        <authorList>
            <person name="Yamada K."/>
            <person name="Lim J."/>
            <person name="Dale J.M."/>
            <person name="Chen H."/>
            <person name="Shinn P."/>
            <person name="Palm C.J."/>
            <person name="Southwick A.M."/>
            <person name="Wu H.C."/>
            <person name="Kim C.J."/>
            <person name="Nguyen M."/>
            <person name="Pham P.K."/>
            <person name="Cheuk R.F."/>
            <person name="Karlin-Newmann G."/>
            <person name="Liu S.X."/>
            <person name="Lam B."/>
            <person name="Sakano H."/>
            <person name="Wu T."/>
            <person name="Yu G."/>
            <person name="Miranda M."/>
            <person name="Quach H.L."/>
            <person name="Tripp M."/>
            <person name="Chang C.H."/>
            <person name="Lee J.M."/>
            <person name="Toriumi M.J."/>
            <person name="Chan M.M."/>
            <person name="Tang C.C."/>
            <person name="Onodera C.S."/>
            <person name="Deng J.M."/>
            <person name="Akiyama K."/>
            <person name="Ansari Y."/>
            <person name="Arakawa T."/>
            <person name="Banh J."/>
            <person name="Banno F."/>
            <person name="Bowser L."/>
            <person name="Brooks S.Y."/>
            <person name="Carninci P."/>
            <person name="Chao Q."/>
            <person name="Choy N."/>
            <person name="Enju A."/>
            <person name="Goldsmith A.D."/>
            <person name="Gurjal M."/>
            <person name="Hansen N.F."/>
            <person name="Hayashizaki Y."/>
            <person name="Johnson-Hopson C."/>
            <person name="Hsuan V.W."/>
            <person name="Iida K."/>
            <person name="Karnes M."/>
            <person name="Khan S."/>
            <person name="Koesema E."/>
            <person name="Ishida J."/>
            <person name="Jiang P.X."/>
            <person name="Jones T."/>
            <person name="Kawai J."/>
            <person name="Kamiya A."/>
            <person name="Meyers C."/>
            <person name="Nakajima M."/>
            <person name="Narusaka M."/>
            <person name="Seki M."/>
            <person name="Sakurai T."/>
            <person name="Satou M."/>
            <person name="Tamse R."/>
            <person name="Vaysberg M."/>
            <person name="Wallender E.K."/>
            <person name="Wong C."/>
            <person name="Yamamura Y."/>
            <person name="Yuan S."/>
            <person name="Shinozaki K."/>
            <person name="Davis R.W."/>
            <person name="Theologis A."/>
            <person name="Ecker J.R."/>
        </authorList>
    </citation>
    <scope>NUCLEOTIDE SEQUENCE [LARGE SCALE MRNA] OF 228-658</scope>
    <source>
        <strain>cv. Columbia</strain>
    </source>
</reference>
<reference key="4">
    <citation type="journal article" date="2010" name="Physiol. Plantarum">
        <title>Transmembrane nine proteins in yeast and Arabidopsis affect cellular metal contents without changing vacuolar morphology.</title>
        <authorList>
            <person name="Hegelund J.N."/>
            <person name="Jahn T.P."/>
            <person name="Baekgaard L."/>
            <person name="Palmgren M.G."/>
            <person name="Schjoerring J.K."/>
        </authorList>
    </citation>
    <scope>GENE FAMILY</scope>
    <scope>NOMENCLATURE</scope>
</reference>
<reference key="5">
    <citation type="journal article" date="2012" name="Plant Cell">
        <title>The Golgi-localized Arabidopsis endomembrane protein12 contains both endoplasmic reticulum export and Golgi retention signals at its C terminus.</title>
        <authorList>
            <person name="Gao C."/>
            <person name="Yu C.K."/>
            <person name="Qu S."/>
            <person name="San M.W."/>
            <person name="Li K.Y."/>
            <person name="Lo S.W."/>
            <person name="Jiang L."/>
        </authorList>
    </citation>
    <scope>GENE FAMILY</scope>
    <scope>NOMENCLATURE</scope>
</reference>
<protein>
    <recommendedName>
        <fullName evidence="6">Transmembrane 9 superfamily member 11</fullName>
    </recommendedName>
    <alternativeName>
        <fullName evidence="5">Endomembrane protein 6</fullName>
    </alternativeName>
    <alternativeName>
        <fullName evidence="4">Transmembrane nine protein 11</fullName>
        <shortName evidence="4">AtTMN11</shortName>
    </alternativeName>
</protein>